<gene>
    <name type="primary">MRPS16</name>
    <name type="synonym">RPMS16</name>
    <name type="ORF">CGI-132</name>
</gene>
<organism>
    <name type="scientific">Homo sapiens</name>
    <name type="common">Human</name>
    <dbReference type="NCBI Taxonomy" id="9606"/>
    <lineage>
        <taxon>Eukaryota</taxon>
        <taxon>Metazoa</taxon>
        <taxon>Chordata</taxon>
        <taxon>Craniata</taxon>
        <taxon>Vertebrata</taxon>
        <taxon>Euteleostomi</taxon>
        <taxon>Mammalia</taxon>
        <taxon>Eutheria</taxon>
        <taxon>Euarchontoglires</taxon>
        <taxon>Primates</taxon>
        <taxon>Haplorrhini</taxon>
        <taxon>Catarrhini</taxon>
        <taxon>Hominidae</taxon>
        <taxon>Homo</taxon>
    </lineage>
</organism>
<evidence type="ECO:0000255" key="1"/>
<evidence type="ECO:0000269" key="2">
    <source>
    </source>
</evidence>
<evidence type="ECO:0000269" key="3">
    <source>
    </source>
</evidence>
<evidence type="ECO:0000303" key="4">
    <source>
    </source>
</evidence>
<evidence type="ECO:0000303" key="5">
    <source>
    </source>
</evidence>
<evidence type="ECO:0000305" key="6"/>
<evidence type="ECO:0007744" key="7">
    <source>
        <dbReference type="PDB" id="3J9M"/>
    </source>
</evidence>
<evidence type="ECO:0007744" key="8">
    <source>
    </source>
</evidence>
<evidence type="ECO:0007744" key="9">
    <source>
    </source>
</evidence>
<evidence type="ECO:0007744" key="10">
    <source>
    </source>
</evidence>
<evidence type="ECO:0007829" key="11">
    <source>
        <dbReference type="PDB" id="8CSS"/>
    </source>
</evidence>
<dbReference type="EMBL" id="AF151890">
    <property type="protein sequence ID" value="AAD34127.1"/>
    <property type="molecule type" value="mRNA"/>
</dbReference>
<dbReference type="EMBL" id="AB049948">
    <property type="protein sequence ID" value="BAB41001.1"/>
    <property type="molecule type" value="mRNA"/>
</dbReference>
<dbReference type="EMBL" id="AK303204">
    <property type="protein sequence ID" value="BAG64294.1"/>
    <property type="molecule type" value="mRNA"/>
</dbReference>
<dbReference type="EMBL" id="AC016394">
    <property type="status" value="NOT_ANNOTATED_CDS"/>
    <property type="molecule type" value="Genomic_DNA"/>
</dbReference>
<dbReference type="EMBL" id="BC021106">
    <property type="protein sequence ID" value="AAH21106.1"/>
    <property type="molecule type" value="mRNA"/>
</dbReference>
<dbReference type="EMBL" id="AB051351">
    <property type="protein sequence ID" value="BAB54941.1"/>
    <property type="molecule type" value="Genomic_DNA"/>
</dbReference>
<dbReference type="CCDS" id="CCDS7323.1">
    <molecule id="Q9Y3D3-1"/>
</dbReference>
<dbReference type="RefSeq" id="NP_057149.1">
    <molecule id="Q9Y3D3-1"/>
    <property type="nucleotide sequence ID" value="NM_016065.4"/>
</dbReference>
<dbReference type="PDB" id="3J9M">
    <property type="method" value="EM"/>
    <property type="resolution" value="3.50 A"/>
    <property type="chains" value="AM=1-137"/>
</dbReference>
<dbReference type="PDB" id="6NU2">
    <property type="method" value="EM"/>
    <property type="resolution" value="3.90 A"/>
    <property type="chains" value="AM=10-125"/>
</dbReference>
<dbReference type="PDB" id="6NU3">
    <property type="method" value="EM"/>
    <property type="resolution" value="4.40 A"/>
    <property type="chains" value="AM=1-137"/>
</dbReference>
<dbReference type="PDB" id="6RW4">
    <property type="method" value="EM"/>
    <property type="resolution" value="2.97 A"/>
    <property type="chains" value="M=1-137"/>
</dbReference>
<dbReference type="PDB" id="6RW5">
    <property type="method" value="EM"/>
    <property type="resolution" value="3.14 A"/>
    <property type="chains" value="M=1-137"/>
</dbReference>
<dbReference type="PDB" id="6VLZ">
    <property type="method" value="EM"/>
    <property type="resolution" value="2.97 A"/>
    <property type="chains" value="AM=1-137"/>
</dbReference>
<dbReference type="PDB" id="6VMI">
    <property type="method" value="EM"/>
    <property type="resolution" value="2.96 A"/>
    <property type="chains" value="AM=1-137"/>
</dbReference>
<dbReference type="PDB" id="6ZM5">
    <property type="method" value="EM"/>
    <property type="resolution" value="2.89 A"/>
    <property type="chains" value="AM=1-137"/>
</dbReference>
<dbReference type="PDB" id="6ZM6">
    <property type="method" value="EM"/>
    <property type="resolution" value="2.59 A"/>
    <property type="chains" value="AM=1-137"/>
</dbReference>
<dbReference type="PDB" id="6ZS9">
    <property type="method" value="EM"/>
    <property type="resolution" value="4.00 A"/>
    <property type="chains" value="AM=1-137"/>
</dbReference>
<dbReference type="PDB" id="6ZSA">
    <property type="method" value="EM"/>
    <property type="resolution" value="4.00 A"/>
    <property type="chains" value="AM=1-136"/>
</dbReference>
<dbReference type="PDB" id="6ZSB">
    <property type="method" value="EM"/>
    <property type="resolution" value="4.50 A"/>
    <property type="chains" value="AM=1-137"/>
</dbReference>
<dbReference type="PDB" id="6ZSC">
    <property type="method" value="EM"/>
    <property type="resolution" value="3.50 A"/>
    <property type="chains" value="AM=1-137"/>
</dbReference>
<dbReference type="PDB" id="6ZSD">
    <property type="method" value="EM"/>
    <property type="resolution" value="3.70 A"/>
    <property type="chains" value="AM=1-137"/>
</dbReference>
<dbReference type="PDB" id="6ZSE">
    <property type="method" value="EM"/>
    <property type="resolution" value="5.00 A"/>
    <property type="chains" value="AM=1-137"/>
</dbReference>
<dbReference type="PDB" id="6ZSG">
    <property type="method" value="EM"/>
    <property type="resolution" value="4.00 A"/>
    <property type="chains" value="AM=1-137"/>
</dbReference>
<dbReference type="PDB" id="7A5F">
    <property type="method" value="EM"/>
    <property type="resolution" value="4.40 A"/>
    <property type="chains" value="M6=1-137"/>
</dbReference>
<dbReference type="PDB" id="7A5G">
    <property type="method" value="EM"/>
    <property type="resolution" value="4.33 A"/>
    <property type="chains" value="M6=1-137"/>
</dbReference>
<dbReference type="PDB" id="7A5I">
    <property type="method" value="EM"/>
    <property type="resolution" value="3.70 A"/>
    <property type="chains" value="M6=1-137"/>
</dbReference>
<dbReference type="PDB" id="7A5K">
    <property type="method" value="EM"/>
    <property type="resolution" value="3.70 A"/>
    <property type="chains" value="M6=1-137"/>
</dbReference>
<dbReference type="PDB" id="7L08">
    <property type="method" value="EM"/>
    <property type="resolution" value="3.49 A"/>
    <property type="chains" value="AM=1-137"/>
</dbReference>
<dbReference type="PDB" id="7OG4">
    <property type="method" value="EM"/>
    <property type="resolution" value="3.80 A"/>
    <property type="chains" value="AM=1-137"/>
</dbReference>
<dbReference type="PDB" id="7P2E">
    <property type="method" value="EM"/>
    <property type="resolution" value="2.40 A"/>
    <property type="chains" value="M=1-137"/>
</dbReference>
<dbReference type="PDB" id="7PNX">
    <property type="method" value="EM"/>
    <property type="resolution" value="2.76 A"/>
    <property type="chains" value="M=1-137"/>
</dbReference>
<dbReference type="PDB" id="7PNY">
    <property type="method" value="EM"/>
    <property type="resolution" value="3.06 A"/>
    <property type="chains" value="M=1-137"/>
</dbReference>
<dbReference type="PDB" id="7PNZ">
    <property type="method" value="EM"/>
    <property type="resolution" value="3.09 A"/>
    <property type="chains" value="M=1-137"/>
</dbReference>
<dbReference type="PDB" id="7PO0">
    <property type="method" value="EM"/>
    <property type="resolution" value="2.90 A"/>
    <property type="chains" value="M=1-137"/>
</dbReference>
<dbReference type="PDB" id="7PO1">
    <property type="method" value="EM"/>
    <property type="resolution" value="2.92 A"/>
    <property type="chains" value="M=1-137"/>
</dbReference>
<dbReference type="PDB" id="7PO2">
    <property type="method" value="EM"/>
    <property type="resolution" value="3.09 A"/>
    <property type="chains" value="M=1-137"/>
</dbReference>
<dbReference type="PDB" id="7PO3">
    <property type="method" value="EM"/>
    <property type="resolution" value="2.92 A"/>
    <property type="chains" value="M=1-137"/>
</dbReference>
<dbReference type="PDB" id="7QI4">
    <property type="method" value="EM"/>
    <property type="resolution" value="2.21 A"/>
    <property type="chains" value="AM=1-137"/>
</dbReference>
<dbReference type="PDB" id="7QI5">
    <property type="method" value="EM"/>
    <property type="resolution" value="2.63 A"/>
    <property type="chains" value="AM=1-137"/>
</dbReference>
<dbReference type="PDB" id="7QI6">
    <property type="method" value="EM"/>
    <property type="resolution" value="2.98 A"/>
    <property type="chains" value="AM=1-137"/>
</dbReference>
<dbReference type="PDB" id="8ANY">
    <property type="method" value="EM"/>
    <property type="resolution" value="2.85 A"/>
    <property type="chains" value="AM=1-137"/>
</dbReference>
<dbReference type="PDB" id="8CSP">
    <property type="method" value="EM"/>
    <property type="resolution" value="2.66 A"/>
    <property type="chains" value="M=1-137"/>
</dbReference>
<dbReference type="PDB" id="8CSQ">
    <property type="method" value="EM"/>
    <property type="resolution" value="2.54 A"/>
    <property type="chains" value="M=1-137"/>
</dbReference>
<dbReference type="PDB" id="8CSR">
    <property type="method" value="EM"/>
    <property type="resolution" value="2.54 A"/>
    <property type="chains" value="M=1-137"/>
</dbReference>
<dbReference type="PDB" id="8CSS">
    <property type="method" value="EM"/>
    <property type="resolution" value="2.36 A"/>
    <property type="chains" value="M=1-137"/>
</dbReference>
<dbReference type="PDB" id="8CST">
    <property type="method" value="EM"/>
    <property type="resolution" value="2.85 A"/>
    <property type="chains" value="M=1-137"/>
</dbReference>
<dbReference type="PDB" id="8CSU">
    <property type="method" value="EM"/>
    <property type="resolution" value="3.03 A"/>
    <property type="chains" value="M=1-137"/>
</dbReference>
<dbReference type="PDB" id="8K2A">
    <property type="method" value="EM"/>
    <property type="resolution" value="2.90 A"/>
    <property type="chains" value="SP=1-137"/>
</dbReference>
<dbReference type="PDB" id="8OIR">
    <property type="method" value="EM"/>
    <property type="resolution" value="3.10 A"/>
    <property type="chains" value="AM=1-137"/>
</dbReference>
<dbReference type="PDB" id="8OIS">
    <property type="method" value="EM"/>
    <property type="resolution" value="3.00 A"/>
    <property type="chains" value="AM=1-137"/>
</dbReference>
<dbReference type="PDB" id="8QRK">
    <property type="method" value="EM"/>
    <property type="resolution" value="6.69 A"/>
    <property type="chains" value="M=1-137"/>
</dbReference>
<dbReference type="PDB" id="8QRL">
    <property type="method" value="EM"/>
    <property type="resolution" value="3.34 A"/>
    <property type="chains" value="M=1-137"/>
</dbReference>
<dbReference type="PDB" id="8QRM">
    <property type="method" value="EM"/>
    <property type="resolution" value="3.05 A"/>
    <property type="chains" value="M=1-137"/>
</dbReference>
<dbReference type="PDB" id="8QRN">
    <property type="method" value="EM"/>
    <property type="resolution" value="2.98 A"/>
    <property type="chains" value="M=1-137"/>
</dbReference>
<dbReference type="PDB" id="8RRI">
    <property type="method" value="EM"/>
    <property type="resolution" value="2.40 A"/>
    <property type="chains" value="AM=1-137"/>
</dbReference>
<dbReference type="PDB" id="8XT0">
    <property type="method" value="EM"/>
    <property type="resolution" value="3.20 A"/>
    <property type="chains" value="SP=1-137"/>
</dbReference>
<dbReference type="PDB" id="8XT2">
    <property type="method" value="EM"/>
    <property type="resolution" value="3.30 A"/>
    <property type="chains" value="SP=1-137"/>
</dbReference>
<dbReference type="PDBsum" id="3J9M"/>
<dbReference type="PDBsum" id="6NU2"/>
<dbReference type="PDBsum" id="6NU3"/>
<dbReference type="PDBsum" id="6RW4"/>
<dbReference type="PDBsum" id="6RW5"/>
<dbReference type="PDBsum" id="6VLZ"/>
<dbReference type="PDBsum" id="6VMI"/>
<dbReference type="PDBsum" id="6ZM5"/>
<dbReference type="PDBsum" id="6ZM6"/>
<dbReference type="PDBsum" id="6ZS9"/>
<dbReference type="PDBsum" id="6ZSA"/>
<dbReference type="PDBsum" id="6ZSB"/>
<dbReference type="PDBsum" id="6ZSC"/>
<dbReference type="PDBsum" id="6ZSD"/>
<dbReference type="PDBsum" id="6ZSE"/>
<dbReference type="PDBsum" id="6ZSG"/>
<dbReference type="PDBsum" id="7A5F"/>
<dbReference type="PDBsum" id="7A5G"/>
<dbReference type="PDBsum" id="7A5I"/>
<dbReference type="PDBsum" id="7A5K"/>
<dbReference type="PDBsum" id="7L08"/>
<dbReference type="PDBsum" id="7OG4"/>
<dbReference type="PDBsum" id="7P2E"/>
<dbReference type="PDBsum" id="7PNX"/>
<dbReference type="PDBsum" id="7PNY"/>
<dbReference type="PDBsum" id="7PNZ"/>
<dbReference type="PDBsum" id="7PO0"/>
<dbReference type="PDBsum" id="7PO1"/>
<dbReference type="PDBsum" id="7PO2"/>
<dbReference type="PDBsum" id="7PO3"/>
<dbReference type="PDBsum" id="7QI4"/>
<dbReference type="PDBsum" id="7QI5"/>
<dbReference type="PDBsum" id="7QI6"/>
<dbReference type="PDBsum" id="8ANY"/>
<dbReference type="PDBsum" id="8CSP"/>
<dbReference type="PDBsum" id="8CSQ"/>
<dbReference type="PDBsum" id="8CSR"/>
<dbReference type="PDBsum" id="8CSS"/>
<dbReference type="PDBsum" id="8CST"/>
<dbReference type="PDBsum" id="8CSU"/>
<dbReference type="PDBsum" id="8K2A"/>
<dbReference type="PDBsum" id="8OIR"/>
<dbReference type="PDBsum" id="8OIS"/>
<dbReference type="PDBsum" id="8QRK"/>
<dbReference type="PDBsum" id="8QRL"/>
<dbReference type="PDBsum" id="8QRM"/>
<dbReference type="PDBsum" id="8QRN"/>
<dbReference type="PDBsum" id="8RRI"/>
<dbReference type="PDBsum" id="8XT0"/>
<dbReference type="PDBsum" id="8XT2"/>
<dbReference type="EMDB" id="EMD-0514"/>
<dbReference type="EMDB" id="EMD-0515"/>
<dbReference type="EMDB" id="EMD-10021"/>
<dbReference type="EMDB" id="EMD-10022"/>
<dbReference type="EMDB" id="EMD-11278"/>
<dbReference type="EMDB" id="EMD-11279"/>
<dbReference type="EMDB" id="EMD-11390"/>
<dbReference type="EMDB" id="EMD-11391"/>
<dbReference type="EMDB" id="EMD-11392"/>
<dbReference type="EMDB" id="EMD-11393"/>
<dbReference type="EMDB" id="EMD-11394"/>
<dbReference type="EMDB" id="EMD-11395"/>
<dbReference type="EMDB" id="EMD-11397"/>
<dbReference type="EMDB" id="EMD-11641"/>
<dbReference type="EMDB" id="EMD-11642"/>
<dbReference type="EMDB" id="EMD-11644"/>
<dbReference type="EMDB" id="EMD-11646"/>
<dbReference type="EMDB" id="EMD-12877"/>
<dbReference type="EMDB" id="EMD-13170"/>
<dbReference type="EMDB" id="EMD-13555"/>
<dbReference type="EMDB" id="EMD-13556"/>
<dbReference type="EMDB" id="EMD-13557"/>
<dbReference type="EMDB" id="EMD-13558"/>
<dbReference type="EMDB" id="EMD-13559"/>
<dbReference type="EMDB" id="EMD-13560"/>
<dbReference type="EMDB" id="EMD-13561"/>
<dbReference type="EMDB" id="EMD-13980"/>
<dbReference type="EMDB" id="EMD-13981"/>
<dbReference type="EMDB" id="EMD-13982"/>
<dbReference type="EMDB" id="EMD-15544"/>
<dbReference type="EMDB" id="EMD-16897"/>
<dbReference type="EMDB" id="EMD-16898"/>
<dbReference type="EMDB" id="EMD-19460"/>
<dbReference type="EMDB" id="EMD-21233"/>
<dbReference type="EMDB" id="EMD-21242"/>
<dbReference type="EMDB" id="EMD-23096"/>
<dbReference type="EMDB" id="EMD-26966"/>
<dbReference type="EMDB" id="EMD-26967"/>
<dbReference type="EMDB" id="EMD-26968"/>
<dbReference type="EMDB" id="EMD-26969"/>
<dbReference type="EMDB" id="EMD-26970"/>
<dbReference type="EMDB" id="EMD-26971"/>
<dbReference type="EMDB" id="EMD-36836"/>
<dbReference type="EMDB" id="EMD-38632"/>
<dbReference type="EMDB" id="EMD-38634"/>
<dbReference type="SMR" id="Q9Y3D3"/>
<dbReference type="BioGRID" id="119227">
    <property type="interactions" value="206"/>
</dbReference>
<dbReference type="ComplexPortal" id="CPX-5225">
    <property type="entry name" value="28S mitochondrial small ribosomal subunit"/>
</dbReference>
<dbReference type="CORUM" id="Q9Y3D3"/>
<dbReference type="FunCoup" id="Q9Y3D3">
    <property type="interactions" value="2379"/>
</dbReference>
<dbReference type="IntAct" id="Q9Y3D3">
    <property type="interactions" value="69"/>
</dbReference>
<dbReference type="MINT" id="Q9Y3D3"/>
<dbReference type="STRING" id="9606.ENSP00000362036"/>
<dbReference type="GlyGen" id="Q9Y3D3">
    <property type="glycosylation" value="1 site, 1 O-linked glycan (1 site)"/>
</dbReference>
<dbReference type="iPTMnet" id="Q9Y3D3"/>
<dbReference type="PhosphoSitePlus" id="Q9Y3D3"/>
<dbReference type="SwissPalm" id="Q9Y3D3"/>
<dbReference type="BioMuta" id="MRPS16"/>
<dbReference type="jPOST" id="Q9Y3D3"/>
<dbReference type="MassIVE" id="Q9Y3D3"/>
<dbReference type="PaxDb" id="9606-ENSP00000362036"/>
<dbReference type="PeptideAtlas" id="Q9Y3D3"/>
<dbReference type="ProteomicsDB" id="5646"/>
<dbReference type="ProteomicsDB" id="86020">
    <molecule id="Q9Y3D3-1"/>
</dbReference>
<dbReference type="Pumba" id="Q9Y3D3"/>
<dbReference type="Antibodypedia" id="45368">
    <property type="antibodies" value="120 antibodies from 23 providers"/>
</dbReference>
<dbReference type="DNASU" id="51021"/>
<dbReference type="Ensembl" id="ENST00000372945.8">
    <molecule id="Q9Y3D3-1"/>
    <property type="protein sequence ID" value="ENSP00000362036.3"/>
    <property type="gene ID" value="ENSG00000182180.14"/>
</dbReference>
<dbReference type="GeneID" id="51021"/>
<dbReference type="KEGG" id="hsa:51021"/>
<dbReference type="MANE-Select" id="ENST00000372945.8">
    <property type="protein sequence ID" value="ENSP00000362036.3"/>
    <property type="RefSeq nucleotide sequence ID" value="NM_016065.4"/>
    <property type="RefSeq protein sequence ID" value="NP_057149.1"/>
</dbReference>
<dbReference type="UCSC" id="uc001jts.1">
    <molecule id="Q9Y3D3-1"/>
    <property type="organism name" value="human"/>
</dbReference>
<dbReference type="AGR" id="HGNC:14048"/>
<dbReference type="CTD" id="51021"/>
<dbReference type="DisGeNET" id="51021"/>
<dbReference type="GeneCards" id="MRPS16"/>
<dbReference type="HGNC" id="HGNC:14048">
    <property type="gene designation" value="MRPS16"/>
</dbReference>
<dbReference type="HPA" id="ENSG00000182180">
    <property type="expression patterns" value="Low tissue specificity"/>
</dbReference>
<dbReference type="MalaCards" id="MRPS16"/>
<dbReference type="MIM" id="609204">
    <property type="type" value="gene"/>
</dbReference>
<dbReference type="MIM" id="610498">
    <property type="type" value="phenotype"/>
</dbReference>
<dbReference type="neXtProt" id="NX_Q9Y3D3"/>
<dbReference type="OpenTargets" id="ENSG00000182180"/>
<dbReference type="Orphanet" id="254920">
    <property type="disease" value="Combined oxidative phosphorylation defect type 2"/>
</dbReference>
<dbReference type="PharmGKB" id="PA31000"/>
<dbReference type="VEuPathDB" id="HostDB:ENSG00000182180"/>
<dbReference type="eggNOG" id="KOG3419">
    <property type="taxonomic scope" value="Eukaryota"/>
</dbReference>
<dbReference type="GeneTree" id="ENSGT00390000014309"/>
<dbReference type="HOGENOM" id="CLU_100590_4_0_1"/>
<dbReference type="InParanoid" id="Q9Y3D3"/>
<dbReference type="OMA" id="PNDYNER"/>
<dbReference type="OrthoDB" id="407221at2759"/>
<dbReference type="PAN-GO" id="Q9Y3D3">
    <property type="GO annotations" value="2 GO annotations based on evolutionary models"/>
</dbReference>
<dbReference type="PhylomeDB" id="Q9Y3D3"/>
<dbReference type="TreeFam" id="TF105637"/>
<dbReference type="PathwayCommons" id="Q9Y3D3"/>
<dbReference type="Reactome" id="R-HSA-5368286">
    <property type="pathway name" value="Mitochondrial translation initiation"/>
</dbReference>
<dbReference type="Reactome" id="R-HSA-5389840">
    <property type="pathway name" value="Mitochondrial translation elongation"/>
</dbReference>
<dbReference type="Reactome" id="R-HSA-5419276">
    <property type="pathway name" value="Mitochondrial translation termination"/>
</dbReference>
<dbReference type="SignaLink" id="Q9Y3D3"/>
<dbReference type="SIGNOR" id="Q9Y3D3"/>
<dbReference type="BioGRID-ORCS" id="51021">
    <property type="hits" value="462 hits in 1175 CRISPR screens"/>
</dbReference>
<dbReference type="ChiTaRS" id="MRPS16">
    <property type="organism name" value="human"/>
</dbReference>
<dbReference type="GeneWiki" id="MRPS16"/>
<dbReference type="GenomeRNAi" id="51021"/>
<dbReference type="Pharos" id="Q9Y3D3">
    <property type="development level" value="Tbio"/>
</dbReference>
<dbReference type="PRO" id="PR:Q9Y3D3"/>
<dbReference type="Proteomes" id="UP000005640">
    <property type="component" value="Chromosome 10"/>
</dbReference>
<dbReference type="RNAct" id="Q9Y3D3">
    <property type="molecule type" value="protein"/>
</dbReference>
<dbReference type="Bgee" id="ENSG00000182180">
    <property type="expression patterns" value="Expressed in mucosa of transverse colon and 190 other cell types or tissues"/>
</dbReference>
<dbReference type="ExpressionAtlas" id="Q9Y3D3">
    <property type="expression patterns" value="baseline and differential"/>
</dbReference>
<dbReference type="GO" id="GO:0005829">
    <property type="term" value="C:cytosol"/>
    <property type="evidence" value="ECO:0000314"/>
    <property type="project" value="HPA"/>
</dbReference>
<dbReference type="GO" id="GO:0005743">
    <property type="term" value="C:mitochondrial inner membrane"/>
    <property type="evidence" value="ECO:0000304"/>
    <property type="project" value="Reactome"/>
</dbReference>
<dbReference type="GO" id="GO:0005763">
    <property type="term" value="C:mitochondrial small ribosomal subunit"/>
    <property type="evidence" value="ECO:0000314"/>
    <property type="project" value="UniProtKB"/>
</dbReference>
<dbReference type="GO" id="GO:0005739">
    <property type="term" value="C:mitochondrion"/>
    <property type="evidence" value="ECO:0000314"/>
    <property type="project" value="HPA"/>
</dbReference>
<dbReference type="GO" id="GO:0003735">
    <property type="term" value="F:structural constituent of ribosome"/>
    <property type="evidence" value="ECO:0000250"/>
    <property type="project" value="UniProtKB"/>
</dbReference>
<dbReference type="GO" id="GO:0032543">
    <property type="term" value="P:mitochondrial translation"/>
    <property type="evidence" value="ECO:0000250"/>
    <property type="project" value="UniProtKB"/>
</dbReference>
<dbReference type="GO" id="GO:0006412">
    <property type="term" value="P:translation"/>
    <property type="evidence" value="ECO:0000303"/>
    <property type="project" value="UniProtKB"/>
</dbReference>
<dbReference type="FunFam" id="3.30.1320.10:FF:000004">
    <property type="entry name" value="28S ribosomal protein S16, mitochondrial"/>
    <property type="match status" value="1"/>
</dbReference>
<dbReference type="Gene3D" id="3.30.1320.10">
    <property type="match status" value="1"/>
</dbReference>
<dbReference type="HAMAP" id="MF_00385">
    <property type="entry name" value="Ribosomal_bS16"/>
    <property type="match status" value="1"/>
</dbReference>
<dbReference type="InterPro" id="IPR000307">
    <property type="entry name" value="Ribosomal_bS16"/>
</dbReference>
<dbReference type="InterPro" id="IPR023803">
    <property type="entry name" value="Ribosomal_bS16_dom_sf"/>
</dbReference>
<dbReference type="NCBIfam" id="TIGR00002">
    <property type="entry name" value="S16"/>
    <property type="match status" value="1"/>
</dbReference>
<dbReference type="PANTHER" id="PTHR12919">
    <property type="entry name" value="30S RIBOSOMAL PROTEIN S16"/>
    <property type="match status" value="1"/>
</dbReference>
<dbReference type="PANTHER" id="PTHR12919:SF20">
    <property type="entry name" value="SMALL RIBOSOMAL SUBUNIT PROTEIN BS16M"/>
    <property type="match status" value="1"/>
</dbReference>
<dbReference type="Pfam" id="PF00886">
    <property type="entry name" value="Ribosomal_S16"/>
    <property type="match status" value="1"/>
</dbReference>
<dbReference type="SUPFAM" id="SSF54565">
    <property type="entry name" value="Ribosomal protein S16"/>
    <property type="match status" value="1"/>
</dbReference>
<reference key="1">
    <citation type="journal article" date="2000" name="Genome Res.">
        <title>Identification of novel human genes evolutionarily conserved in Caenorhabditis elegans by comparative proteomics.</title>
        <authorList>
            <person name="Lai C.-H."/>
            <person name="Chou C.-Y."/>
            <person name="Ch'ang L.-Y."/>
            <person name="Liu C.-S."/>
            <person name="Lin W.-C."/>
        </authorList>
    </citation>
    <scope>NUCLEOTIDE SEQUENCE [LARGE SCALE MRNA] (ISOFORM 1)</scope>
</reference>
<reference key="2">
    <citation type="journal article" date="2001" name="J. Biol. Chem.">
        <title>Proteomic analysis of the mammalian mitochondrial ribosome. Identification of protein components in the 28S small subunit.</title>
        <authorList>
            <person name="Suzuki T."/>
            <person name="Terasaki M."/>
            <person name="Takemoto-Hori C."/>
            <person name="Hanada T."/>
            <person name="Ueda T."/>
            <person name="Wada A."/>
            <person name="Watanabe K."/>
        </authorList>
    </citation>
    <scope>NUCLEOTIDE SEQUENCE [MRNA] (ISOFORM 1)</scope>
</reference>
<reference key="3">
    <citation type="journal article" date="2004" name="Nat. Genet.">
        <title>Complete sequencing and characterization of 21,243 full-length human cDNAs.</title>
        <authorList>
            <person name="Ota T."/>
            <person name="Suzuki Y."/>
            <person name="Nishikawa T."/>
            <person name="Otsuki T."/>
            <person name="Sugiyama T."/>
            <person name="Irie R."/>
            <person name="Wakamatsu A."/>
            <person name="Hayashi K."/>
            <person name="Sato H."/>
            <person name="Nagai K."/>
            <person name="Kimura K."/>
            <person name="Makita H."/>
            <person name="Sekine M."/>
            <person name="Obayashi M."/>
            <person name="Nishi T."/>
            <person name="Shibahara T."/>
            <person name="Tanaka T."/>
            <person name="Ishii S."/>
            <person name="Yamamoto J."/>
            <person name="Saito K."/>
            <person name="Kawai Y."/>
            <person name="Isono Y."/>
            <person name="Nakamura Y."/>
            <person name="Nagahari K."/>
            <person name="Murakami K."/>
            <person name="Yasuda T."/>
            <person name="Iwayanagi T."/>
            <person name="Wagatsuma M."/>
            <person name="Shiratori A."/>
            <person name="Sudo H."/>
            <person name="Hosoiri T."/>
            <person name="Kaku Y."/>
            <person name="Kodaira H."/>
            <person name="Kondo H."/>
            <person name="Sugawara M."/>
            <person name="Takahashi M."/>
            <person name="Kanda K."/>
            <person name="Yokoi T."/>
            <person name="Furuya T."/>
            <person name="Kikkawa E."/>
            <person name="Omura Y."/>
            <person name="Abe K."/>
            <person name="Kamihara K."/>
            <person name="Katsuta N."/>
            <person name="Sato K."/>
            <person name="Tanikawa M."/>
            <person name="Yamazaki M."/>
            <person name="Ninomiya K."/>
            <person name="Ishibashi T."/>
            <person name="Yamashita H."/>
            <person name="Murakawa K."/>
            <person name="Fujimori K."/>
            <person name="Tanai H."/>
            <person name="Kimata M."/>
            <person name="Watanabe M."/>
            <person name="Hiraoka S."/>
            <person name="Chiba Y."/>
            <person name="Ishida S."/>
            <person name="Ono Y."/>
            <person name="Takiguchi S."/>
            <person name="Watanabe S."/>
            <person name="Yosida M."/>
            <person name="Hotuta T."/>
            <person name="Kusano J."/>
            <person name="Kanehori K."/>
            <person name="Takahashi-Fujii A."/>
            <person name="Hara H."/>
            <person name="Tanase T.-O."/>
            <person name="Nomura Y."/>
            <person name="Togiya S."/>
            <person name="Komai F."/>
            <person name="Hara R."/>
            <person name="Takeuchi K."/>
            <person name="Arita M."/>
            <person name="Imose N."/>
            <person name="Musashino K."/>
            <person name="Yuuki H."/>
            <person name="Oshima A."/>
            <person name="Sasaki N."/>
            <person name="Aotsuka S."/>
            <person name="Yoshikawa Y."/>
            <person name="Matsunawa H."/>
            <person name="Ichihara T."/>
            <person name="Shiohata N."/>
            <person name="Sano S."/>
            <person name="Moriya S."/>
            <person name="Momiyama H."/>
            <person name="Satoh N."/>
            <person name="Takami S."/>
            <person name="Terashima Y."/>
            <person name="Suzuki O."/>
            <person name="Nakagawa S."/>
            <person name="Senoh A."/>
            <person name="Mizoguchi H."/>
            <person name="Goto Y."/>
            <person name="Shimizu F."/>
            <person name="Wakebe H."/>
            <person name="Hishigaki H."/>
            <person name="Watanabe T."/>
            <person name="Sugiyama A."/>
            <person name="Takemoto M."/>
            <person name="Kawakami B."/>
            <person name="Yamazaki M."/>
            <person name="Watanabe K."/>
            <person name="Kumagai A."/>
            <person name="Itakura S."/>
            <person name="Fukuzumi Y."/>
            <person name="Fujimori Y."/>
            <person name="Komiyama M."/>
            <person name="Tashiro H."/>
            <person name="Tanigami A."/>
            <person name="Fujiwara T."/>
            <person name="Ono T."/>
            <person name="Yamada K."/>
            <person name="Fujii Y."/>
            <person name="Ozaki K."/>
            <person name="Hirao M."/>
            <person name="Ohmori Y."/>
            <person name="Kawabata A."/>
            <person name="Hikiji T."/>
            <person name="Kobatake N."/>
            <person name="Inagaki H."/>
            <person name="Ikema Y."/>
            <person name="Okamoto S."/>
            <person name="Okitani R."/>
            <person name="Kawakami T."/>
            <person name="Noguchi S."/>
            <person name="Itoh T."/>
            <person name="Shigeta K."/>
            <person name="Senba T."/>
            <person name="Matsumura K."/>
            <person name="Nakajima Y."/>
            <person name="Mizuno T."/>
            <person name="Morinaga M."/>
            <person name="Sasaki M."/>
            <person name="Togashi T."/>
            <person name="Oyama M."/>
            <person name="Hata H."/>
            <person name="Watanabe M."/>
            <person name="Komatsu T."/>
            <person name="Mizushima-Sugano J."/>
            <person name="Satoh T."/>
            <person name="Shirai Y."/>
            <person name="Takahashi Y."/>
            <person name="Nakagawa K."/>
            <person name="Okumura K."/>
            <person name="Nagase T."/>
            <person name="Nomura N."/>
            <person name="Kikuchi H."/>
            <person name="Masuho Y."/>
            <person name="Yamashita R."/>
            <person name="Nakai K."/>
            <person name="Yada T."/>
            <person name="Nakamura Y."/>
            <person name="Ohara O."/>
            <person name="Isogai T."/>
            <person name="Sugano S."/>
        </authorList>
    </citation>
    <scope>NUCLEOTIDE SEQUENCE [LARGE SCALE MRNA] (ISOFORM 2)</scope>
    <source>
        <tissue>Thymus</tissue>
    </source>
</reference>
<reference key="4">
    <citation type="journal article" date="2004" name="Nature">
        <title>The DNA sequence and comparative analysis of human chromosome 10.</title>
        <authorList>
            <person name="Deloukas P."/>
            <person name="Earthrowl M.E."/>
            <person name="Grafham D.V."/>
            <person name="Rubenfield M."/>
            <person name="French L."/>
            <person name="Steward C.A."/>
            <person name="Sims S.K."/>
            <person name="Jones M.C."/>
            <person name="Searle S."/>
            <person name="Scott C."/>
            <person name="Howe K."/>
            <person name="Hunt S.E."/>
            <person name="Andrews T.D."/>
            <person name="Gilbert J.G.R."/>
            <person name="Swarbreck D."/>
            <person name="Ashurst J.L."/>
            <person name="Taylor A."/>
            <person name="Battles J."/>
            <person name="Bird C.P."/>
            <person name="Ainscough R."/>
            <person name="Almeida J.P."/>
            <person name="Ashwell R.I.S."/>
            <person name="Ambrose K.D."/>
            <person name="Babbage A.K."/>
            <person name="Bagguley C.L."/>
            <person name="Bailey J."/>
            <person name="Banerjee R."/>
            <person name="Bates K."/>
            <person name="Beasley H."/>
            <person name="Bray-Allen S."/>
            <person name="Brown A.J."/>
            <person name="Brown J.Y."/>
            <person name="Burford D.C."/>
            <person name="Burrill W."/>
            <person name="Burton J."/>
            <person name="Cahill P."/>
            <person name="Camire D."/>
            <person name="Carter N.P."/>
            <person name="Chapman J.C."/>
            <person name="Clark S.Y."/>
            <person name="Clarke G."/>
            <person name="Clee C.M."/>
            <person name="Clegg S."/>
            <person name="Corby N."/>
            <person name="Coulson A."/>
            <person name="Dhami P."/>
            <person name="Dutta I."/>
            <person name="Dunn M."/>
            <person name="Faulkner L."/>
            <person name="Frankish A."/>
            <person name="Frankland J.A."/>
            <person name="Garner P."/>
            <person name="Garnett J."/>
            <person name="Gribble S."/>
            <person name="Griffiths C."/>
            <person name="Grocock R."/>
            <person name="Gustafson E."/>
            <person name="Hammond S."/>
            <person name="Harley J.L."/>
            <person name="Hart E."/>
            <person name="Heath P.D."/>
            <person name="Ho T.P."/>
            <person name="Hopkins B."/>
            <person name="Horne J."/>
            <person name="Howden P.J."/>
            <person name="Huckle E."/>
            <person name="Hynds C."/>
            <person name="Johnson C."/>
            <person name="Johnson D."/>
            <person name="Kana A."/>
            <person name="Kay M."/>
            <person name="Kimberley A.M."/>
            <person name="Kershaw J.K."/>
            <person name="Kokkinaki M."/>
            <person name="Laird G.K."/>
            <person name="Lawlor S."/>
            <person name="Lee H.M."/>
            <person name="Leongamornlert D.A."/>
            <person name="Laird G."/>
            <person name="Lloyd C."/>
            <person name="Lloyd D.M."/>
            <person name="Loveland J."/>
            <person name="Lovell J."/>
            <person name="McLaren S."/>
            <person name="McLay K.E."/>
            <person name="McMurray A."/>
            <person name="Mashreghi-Mohammadi M."/>
            <person name="Matthews L."/>
            <person name="Milne S."/>
            <person name="Nickerson T."/>
            <person name="Nguyen M."/>
            <person name="Overton-Larty E."/>
            <person name="Palmer S.A."/>
            <person name="Pearce A.V."/>
            <person name="Peck A.I."/>
            <person name="Pelan S."/>
            <person name="Phillimore B."/>
            <person name="Porter K."/>
            <person name="Rice C.M."/>
            <person name="Rogosin A."/>
            <person name="Ross M.T."/>
            <person name="Sarafidou T."/>
            <person name="Sehra H.K."/>
            <person name="Shownkeen R."/>
            <person name="Skuce C.D."/>
            <person name="Smith M."/>
            <person name="Standring L."/>
            <person name="Sycamore N."/>
            <person name="Tester J."/>
            <person name="Thorpe A."/>
            <person name="Torcasso W."/>
            <person name="Tracey A."/>
            <person name="Tromans A."/>
            <person name="Tsolas J."/>
            <person name="Wall M."/>
            <person name="Walsh J."/>
            <person name="Wang H."/>
            <person name="Weinstock K."/>
            <person name="West A.P."/>
            <person name="Willey D.L."/>
            <person name="Whitehead S.L."/>
            <person name="Wilming L."/>
            <person name="Wray P.W."/>
            <person name="Young L."/>
            <person name="Chen Y."/>
            <person name="Lovering R.C."/>
            <person name="Moschonas N.K."/>
            <person name="Siebert R."/>
            <person name="Fechtel K."/>
            <person name="Bentley D."/>
            <person name="Durbin R.M."/>
            <person name="Hubbard T."/>
            <person name="Doucette-Stamm L."/>
            <person name="Beck S."/>
            <person name="Smith D.R."/>
            <person name="Rogers J."/>
        </authorList>
    </citation>
    <scope>NUCLEOTIDE SEQUENCE [LARGE SCALE GENOMIC DNA]</scope>
</reference>
<reference key="5">
    <citation type="journal article" date="2004" name="Genome Res.">
        <title>The status, quality, and expansion of the NIH full-length cDNA project: the Mammalian Gene Collection (MGC).</title>
        <authorList>
            <consortium name="The MGC Project Team"/>
        </authorList>
    </citation>
    <scope>NUCLEOTIDE SEQUENCE [LARGE SCALE MRNA] (ISOFORM 1)</scope>
    <source>
        <tissue>Muscle</tissue>
    </source>
</reference>
<reference key="6">
    <citation type="journal article" date="2001" name="Genomics">
        <title>The human mitochondrial ribosomal protein genes: mapping of 54 genes to the chromosomes and implications for human disorders.</title>
        <authorList>
            <person name="Kenmochi N."/>
            <person name="Suzuki T."/>
            <person name="Uechi T."/>
            <person name="Magoori M."/>
            <person name="Kuniba M."/>
            <person name="Higa S."/>
            <person name="Watanabe K."/>
            <person name="Tanaka T."/>
        </authorList>
    </citation>
    <scope>NUCLEOTIDE SEQUENCE [GENOMIC DNA] OF 6-35</scope>
</reference>
<reference key="7">
    <citation type="journal article" date="2001" name="J. Biol. Chem.">
        <title>The small subunit of the mammalian mitochondrial ribosome: identification of the full complement of ribosomal proteins present.</title>
        <authorList>
            <person name="Koc E.C."/>
            <person name="Burkhart W."/>
            <person name="Blackburn K."/>
            <person name="Moseley A."/>
            <person name="Spremulli L.L."/>
        </authorList>
    </citation>
    <scope>IDENTIFICATION</scope>
</reference>
<reference key="8">
    <citation type="journal article" date="2004" name="Ann. Neurol.">
        <title>Defective mitochondrial translation caused by a ribosomal protein (MRPS16) mutation.</title>
        <authorList>
            <person name="Miller C."/>
            <person name="Saada A."/>
            <person name="Shaul N."/>
            <person name="Shabtai N."/>
            <person name="Ben-Shalom E."/>
            <person name="Shaag A."/>
            <person name="Hershkovitz E."/>
            <person name="Elpeleg O."/>
        </authorList>
    </citation>
    <scope>INVOLVEMENT IN COXPD2</scope>
</reference>
<reference key="9">
    <citation type="journal article" date="2008" name="Proc. Natl. Acad. Sci. U.S.A.">
        <title>A quantitative atlas of mitotic phosphorylation.</title>
        <authorList>
            <person name="Dephoure N."/>
            <person name="Zhou C."/>
            <person name="Villen J."/>
            <person name="Beausoleil S.A."/>
            <person name="Bakalarski C.E."/>
            <person name="Elledge S.J."/>
            <person name="Gygi S.P."/>
        </authorList>
    </citation>
    <scope>PHOSPHORYLATION [LARGE SCALE ANALYSIS] AT THR-130</scope>
    <scope>IDENTIFICATION BY MASS SPECTROMETRY [LARGE SCALE ANALYSIS]</scope>
    <source>
        <tissue>Cervix carcinoma</tissue>
    </source>
</reference>
<reference key="10">
    <citation type="journal article" date="2009" name="Sci. Signal.">
        <title>Quantitative phosphoproteomic analysis of T cell receptor signaling reveals system-wide modulation of protein-protein interactions.</title>
        <authorList>
            <person name="Mayya V."/>
            <person name="Lundgren D.H."/>
            <person name="Hwang S.-I."/>
            <person name="Rezaul K."/>
            <person name="Wu L."/>
            <person name="Eng J.K."/>
            <person name="Rodionov V."/>
            <person name="Han D.K."/>
        </authorList>
    </citation>
    <scope>PHOSPHORYLATION [LARGE SCALE ANALYSIS] AT THR-130</scope>
    <scope>IDENTIFICATION BY MASS SPECTROMETRY [LARGE SCALE ANALYSIS]</scope>
    <source>
        <tissue>Leukemic T-cell</tissue>
    </source>
</reference>
<reference key="11">
    <citation type="journal article" date="2010" name="Sci. Signal.">
        <title>Quantitative phosphoproteomics reveals widespread full phosphorylation site occupancy during mitosis.</title>
        <authorList>
            <person name="Olsen J.V."/>
            <person name="Vermeulen M."/>
            <person name="Santamaria A."/>
            <person name="Kumar C."/>
            <person name="Miller M.L."/>
            <person name="Jensen L.J."/>
            <person name="Gnad F."/>
            <person name="Cox J."/>
            <person name="Jensen T.S."/>
            <person name="Nigg E.A."/>
            <person name="Brunak S."/>
            <person name="Mann M."/>
        </authorList>
    </citation>
    <scope>IDENTIFICATION BY MASS SPECTROMETRY [LARGE SCALE ANALYSIS]</scope>
    <source>
        <tissue>Cervix carcinoma</tissue>
    </source>
</reference>
<reference key="12">
    <citation type="journal article" date="2011" name="BMC Syst. Biol.">
        <title>Initial characterization of the human central proteome.</title>
        <authorList>
            <person name="Burkard T.R."/>
            <person name="Planyavsky M."/>
            <person name="Kaupe I."/>
            <person name="Breitwieser F.P."/>
            <person name="Buerckstuemmer T."/>
            <person name="Bennett K.L."/>
            <person name="Superti-Furga G."/>
            <person name="Colinge J."/>
        </authorList>
    </citation>
    <scope>IDENTIFICATION BY MASS SPECTROMETRY [LARGE SCALE ANALYSIS]</scope>
</reference>
<reference key="13">
    <citation type="journal article" date="2011" name="Sci. Signal.">
        <title>System-wide temporal characterization of the proteome and phosphoproteome of human embryonic stem cell differentiation.</title>
        <authorList>
            <person name="Rigbolt K.T."/>
            <person name="Prokhorova T.A."/>
            <person name="Akimov V."/>
            <person name="Henningsen J."/>
            <person name="Johansen P.T."/>
            <person name="Kratchmarova I."/>
            <person name="Kassem M."/>
            <person name="Mann M."/>
            <person name="Olsen J.V."/>
            <person name="Blagoev B."/>
        </authorList>
    </citation>
    <scope>PHOSPHORYLATION [LARGE SCALE ANALYSIS] AT THR-130</scope>
    <scope>IDENTIFICATION BY MASS SPECTROMETRY [LARGE SCALE ANALYSIS]</scope>
</reference>
<reference key="14">
    <citation type="journal article" date="2015" name="Proteomics">
        <title>N-terminome analysis of the human mitochondrial proteome.</title>
        <authorList>
            <person name="Vaca Jacome A.S."/>
            <person name="Rabilloud T."/>
            <person name="Schaeffer-Reiss C."/>
            <person name="Rompais M."/>
            <person name="Ayoub D."/>
            <person name="Lane L."/>
            <person name="Bairoch A."/>
            <person name="Van Dorsselaer A."/>
            <person name="Carapito C."/>
        </authorList>
    </citation>
    <scope>IDENTIFICATION BY MASS SPECTROMETRY [LARGE SCALE ANALYSIS]</scope>
</reference>
<reference evidence="7" key="15">
    <citation type="journal article" date="2015" name="Science">
        <title>Ribosome. The structure of the human mitochondrial ribosome.</title>
        <authorList>
            <person name="Amunts A."/>
            <person name="Brown A."/>
            <person name="Toots J."/>
            <person name="Scheres S.H."/>
            <person name="Ramakrishnan V."/>
        </authorList>
    </citation>
    <scope>STRUCTURE BY ELECTRON MICROSCOPY (3.50 ANGSTROMS)</scope>
    <scope>SUBCELLULAR LOCATION</scope>
    <scope>SUBUNIT</scope>
</reference>
<sequence>MVHLTTLLCKAYRGGHLTIRLALGGCTNRPFYRIVAAHNKCPRDGRFVEQLGSYDPLPNSHGEKLVALNLDRIRHWIGCGAHLSKPMEKLLGLAGFFPLHPMMITNAERLRRKRAREVLLASQKTDAEATDTEATET</sequence>
<proteinExistence type="evidence at protein level"/>
<accession>Q9Y3D3</accession>
<accession>B4E032</accession>
<accession>Q96Q60</accession>
<comment type="subunit">
    <text evidence="3">Component of the mitochondrial small ribosomal subunit (mt-SSU). Mature mammalian 55S mitochondrial ribosomes consist of a small (28S) and a large (39S) subunit. The 28S small subunit contains a 12S ribosomal RNA (12S mt-rRNA) and 30 different proteins. The 39S large subunit contains a 16S rRNA (16S mt-rRNA), a copy of mitochondrial valine transfer RNA (mt-tRNA(Val)), which plays an integral structural role, and 52 different proteins. bS16m has a zinc binding site.</text>
</comment>
<comment type="subcellular location">
    <subcellularLocation>
        <location evidence="3">Mitochondrion</location>
    </subcellularLocation>
</comment>
<comment type="alternative products">
    <event type="alternative splicing"/>
    <isoform>
        <id>Q9Y3D3-1</id>
        <name>1</name>
        <sequence type="displayed"/>
    </isoform>
    <isoform>
        <id>Q9Y3D3-2</id>
        <name>2</name>
        <sequence type="described" ref="VSP_056498"/>
    </isoform>
</comment>
<comment type="disease" evidence="2">
    <disease id="DI-01365">
        <name>Combined oxidative phosphorylation deficiency 2</name>
        <acronym>COXPD2</acronym>
        <description>A mitochondrial disease resulting in fatal neonatal metabolic acidosis with agenesis of the corpus callosum.</description>
        <dbReference type="MIM" id="610498"/>
    </disease>
    <text>The disease is caused by variants affecting the gene represented in this entry.</text>
</comment>
<comment type="similarity">
    <text evidence="6">Belongs to the bacterial ribosomal protein bS16 family.</text>
</comment>
<protein>
    <recommendedName>
        <fullName evidence="5">Small ribosomal subunit protein bS16m</fullName>
    </recommendedName>
    <alternativeName>
        <fullName>28S ribosomal protein S16, mitochondrial</fullName>
        <shortName>MRP-S16</shortName>
        <shortName>S16mt</shortName>
    </alternativeName>
</protein>
<keyword id="KW-0002">3D-structure</keyword>
<keyword id="KW-0025">Alternative splicing</keyword>
<keyword id="KW-0496">Mitochondrion</keyword>
<keyword id="KW-0597">Phosphoprotein</keyword>
<keyword id="KW-1274">Primary mitochondrial disease</keyword>
<keyword id="KW-1267">Proteomics identification</keyword>
<keyword id="KW-1185">Reference proteome</keyword>
<keyword id="KW-0687">Ribonucleoprotein</keyword>
<keyword id="KW-0689">Ribosomal protein</keyword>
<keyword id="KW-0809">Transit peptide</keyword>
<feature type="transit peptide" description="Mitochondrion" evidence="1">
    <location>
        <begin position="1"/>
        <end position="34"/>
    </location>
</feature>
<feature type="chain" id="PRO_0000030618" description="Small ribosomal subunit protein bS16m">
    <location>
        <begin position="35"/>
        <end position="137"/>
    </location>
</feature>
<feature type="modified residue" description="Phosphothreonine" evidence="8 9 10">
    <location>
        <position position="130"/>
    </location>
</feature>
<feature type="splice variant" id="VSP_056498" description="In isoform 2." evidence="4">
    <original>LAGFFPLHPMMITNAERLRRKRAREVLLASQKTDAEATDTEATET</original>
    <variation>KTDARFPEQGEERPEQHHFPEDLAPARGRGL</variation>
    <location>
        <begin position="93"/>
        <end position="137"/>
    </location>
</feature>
<feature type="sequence variant" id="VAR_031525" description="In dbSNP:rs7905009.">
    <original>Y</original>
    <variation>H</variation>
    <location>
        <position position="12"/>
    </location>
</feature>
<feature type="strand" evidence="11">
    <location>
        <begin position="17"/>
        <end position="26"/>
    </location>
</feature>
<feature type="strand" evidence="11">
    <location>
        <begin position="29"/>
        <end position="38"/>
    </location>
</feature>
<feature type="strand" evidence="11">
    <location>
        <begin position="48"/>
        <end position="54"/>
    </location>
</feature>
<feature type="strand" evidence="11">
    <location>
        <begin position="62"/>
        <end position="68"/>
    </location>
</feature>
<feature type="helix" evidence="11">
    <location>
        <begin position="70"/>
        <end position="78"/>
    </location>
</feature>
<feature type="helix" evidence="11">
    <location>
        <begin position="85"/>
        <end position="93"/>
    </location>
</feature>
<feature type="helix" evidence="11">
    <location>
        <begin position="101"/>
        <end position="123"/>
    </location>
</feature>
<name>RT16_HUMAN</name>